<organism>
    <name type="scientific">Ehrlichia ruminantium (strain Gardel)</name>
    <dbReference type="NCBI Taxonomy" id="302409"/>
    <lineage>
        <taxon>Bacteria</taxon>
        <taxon>Pseudomonadati</taxon>
        <taxon>Pseudomonadota</taxon>
        <taxon>Alphaproteobacteria</taxon>
        <taxon>Rickettsiales</taxon>
        <taxon>Anaplasmataceae</taxon>
        <taxon>Ehrlichia</taxon>
    </lineage>
</organism>
<reference key="1">
    <citation type="journal article" date="2006" name="J. Bacteriol.">
        <title>Comparative genomic analysis of three strains of Ehrlichia ruminantium reveals an active process of genome size plasticity.</title>
        <authorList>
            <person name="Frutos R."/>
            <person name="Viari A."/>
            <person name="Ferraz C."/>
            <person name="Morgat A."/>
            <person name="Eychenie S."/>
            <person name="Kandassamy Y."/>
            <person name="Chantal I."/>
            <person name="Bensaid A."/>
            <person name="Coissac E."/>
            <person name="Vachiery N."/>
            <person name="Demaille J."/>
            <person name="Martinez D."/>
        </authorList>
    </citation>
    <scope>NUCLEOTIDE SEQUENCE [LARGE SCALE GENOMIC DNA]</scope>
    <source>
        <strain>Gardel</strain>
    </source>
</reference>
<dbReference type="EC" id="5.4.2.12" evidence="1"/>
<dbReference type="EMBL" id="CR925677">
    <property type="protein sequence ID" value="CAI27982.1"/>
    <property type="molecule type" value="Genomic_DNA"/>
</dbReference>
<dbReference type="RefSeq" id="WP_011255645.1">
    <property type="nucleotide sequence ID" value="NC_006831.1"/>
</dbReference>
<dbReference type="SMR" id="Q5FFL8"/>
<dbReference type="KEGG" id="erg:ERGA_CDS_05300"/>
<dbReference type="HOGENOM" id="CLU_026099_2_0_5"/>
<dbReference type="OrthoDB" id="9800863at2"/>
<dbReference type="UniPathway" id="UPA00109">
    <property type="reaction ID" value="UER00186"/>
</dbReference>
<dbReference type="Proteomes" id="UP000000533">
    <property type="component" value="Chromosome"/>
</dbReference>
<dbReference type="GO" id="GO:0005829">
    <property type="term" value="C:cytosol"/>
    <property type="evidence" value="ECO:0007669"/>
    <property type="project" value="TreeGrafter"/>
</dbReference>
<dbReference type="GO" id="GO:0030145">
    <property type="term" value="F:manganese ion binding"/>
    <property type="evidence" value="ECO:0007669"/>
    <property type="project" value="UniProtKB-UniRule"/>
</dbReference>
<dbReference type="GO" id="GO:0004619">
    <property type="term" value="F:phosphoglycerate mutase activity"/>
    <property type="evidence" value="ECO:0007669"/>
    <property type="project" value="UniProtKB-EC"/>
</dbReference>
<dbReference type="GO" id="GO:0006007">
    <property type="term" value="P:glucose catabolic process"/>
    <property type="evidence" value="ECO:0007669"/>
    <property type="project" value="InterPro"/>
</dbReference>
<dbReference type="GO" id="GO:0006096">
    <property type="term" value="P:glycolytic process"/>
    <property type="evidence" value="ECO:0007669"/>
    <property type="project" value="UniProtKB-UniRule"/>
</dbReference>
<dbReference type="CDD" id="cd16010">
    <property type="entry name" value="iPGM"/>
    <property type="match status" value="1"/>
</dbReference>
<dbReference type="FunFam" id="3.40.1450.10:FF:000002">
    <property type="entry name" value="2,3-bisphosphoglycerate-independent phosphoglycerate mutase"/>
    <property type="match status" value="1"/>
</dbReference>
<dbReference type="Gene3D" id="3.40.720.10">
    <property type="entry name" value="Alkaline Phosphatase, subunit A"/>
    <property type="match status" value="1"/>
</dbReference>
<dbReference type="Gene3D" id="3.40.1450.10">
    <property type="entry name" value="BPG-independent phosphoglycerate mutase, domain B"/>
    <property type="match status" value="1"/>
</dbReference>
<dbReference type="HAMAP" id="MF_01038">
    <property type="entry name" value="GpmI"/>
    <property type="match status" value="1"/>
</dbReference>
<dbReference type="InterPro" id="IPR017850">
    <property type="entry name" value="Alkaline_phosphatase_core_sf"/>
</dbReference>
<dbReference type="InterPro" id="IPR011258">
    <property type="entry name" value="BPG-indep_PGM_N"/>
</dbReference>
<dbReference type="InterPro" id="IPR006124">
    <property type="entry name" value="Metalloenzyme"/>
</dbReference>
<dbReference type="InterPro" id="IPR036646">
    <property type="entry name" value="PGAM_B_sf"/>
</dbReference>
<dbReference type="InterPro" id="IPR005995">
    <property type="entry name" value="Pgm_bpd_ind"/>
</dbReference>
<dbReference type="NCBIfam" id="TIGR01307">
    <property type="entry name" value="pgm_bpd_ind"/>
    <property type="match status" value="1"/>
</dbReference>
<dbReference type="PANTHER" id="PTHR31637">
    <property type="entry name" value="2,3-BISPHOSPHOGLYCERATE-INDEPENDENT PHOSPHOGLYCERATE MUTASE"/>
    <property type="match status" value="1"/>
</dbReference>
<dbReference type="PANTHER" id="PTHR31637:SF0">
    <property type="entry name" value="2,3-BISPHOSPHOGLYCERATE-INDEPENDENT PHOSPHOGLYCERATE MUTASE"/>
    <property type="match status" value="1"/>
</dbReference>
<dbReference type="Pfam" id="PF06415">
    <property type="entry name" value="iPGM_N"/>
    <property type="match status" value="1"/>
</dbReference>
<dbReference type="Pfam" id="PF01676">
    <property type="entry name" value="Metalloenzyme"/>
    <property type="match status" value="1"/>
</dbReference>
<dbReference type="PIRSF" id="PIRSF001492">
    <property type="entry name" value="IPGAM"/>
    <property type="match status" value="1"/>
</dbReference>
<dbReference type="SUPFAM" id="SSF64158">
    <property type="entry name" value="2,3-Bisphosphoglycerate-independent phosphoglycerate mutase, substrate-binding domain"/>
    <property type="match status" value="1"/>
</dbReference>
<dbReference type="SUPFAM" id="SSF53649">
    <property type="entry name" value="Alkaline phosphatase-like"/>
    <property type="match status" value="1"/>
</dbReference>
<sequence>MTNHSVILCILDGWGNNKNSQFNAIAQADTPYWDSIISQYPQSNIVTHGPDVGLPDRQIGNSEVGHISLGSGRIVLQDLCRINEEIKNIRKNTHLLEFTEQIKRNNGICHIAGLLSDGGIHSSLSHMLDIIDALSYLKIQVVIHIFLDGRDTPPISALKYINILCSHIKDLNNVSIATISGRYYSMDRDNRLDRTTKAYNSIAFGDGKRYEEPISAVQDNYNAGITDEFIIPCVIGNYQGMNPTDGFIMTNFRSDRVIQILKMITEDQNTNHITLKNTIGMIKYSNELNIPCLFPNKKISNTLGEIISNQQLHQLRIAETEKYAHVTFFFNGGREEVFENEERIIIPSPSVTTYDLVPEMSAYEITDTLIKKINLQKYSLIIINYANADMVGHTGNIEATKKAITTLDQCLGKILKCIHNTNYILVITADHGNAEEMFDVQNNMPYTAHTLNPVPFVVCNYPKKIKLKNGRLSDVAPTILEILNIKQPEEMTGISLIDTSN</sequence>
<comment type="function">
    <text evidence="1">Catalyzes the interconversion of 2-phosphoglycerate and 3-phosphoglycerate.</text>
</comment>
<comment type="catalytic activity">
    <reaction evidence="1">
        <text>(2R)-2-phosphoglycerate = (2R)-3-phosphoglycerate</text>
        <dbReference type="Rhea" id="RHEA:15901"/>
        <dbReference type="ChEBI" id="CHEBI:58272"/>
        <dbReference type="ChEBI" id="CHEBI:58289"/>
        <dbReference type="EC" id="5.4.2.12"/>
    </reaction>
</comment>
<comment type="cofactor">
    <cofactor evidence="1">
        <name>Mn(2+)</name>
        <dbReference type="ChEBI" id="CHEBI:29035"/>
    </cofactor>
    <text evidence="1">Binds 2 manganese ions per subunit.</text>
</comment>
<comment type="pathway">
    <text evidence="1">Carbohydrate degradation; glycolysis; pyruvate from D-glyceraldehyde 3-phosphate: step 3/5.</text>
</comment>
<comment type="subunit">
    <text evidence="1">Monomer.</text>
</comment>
<comment type="similarity">
    <text evidence="1">Belongs to the BPG-independent phosphoglycerate mutase family.</text>
</comment>
<gene>
    <name evidence="1" type="primary">gpmI</name>
    <name type="ordered locus">ERGA_CDS_05300</name>
</gene>
<proteinExistence type="inferred from homology"/>
<keyword id="KW-0324">Glycolysis</keyword>
<keyword id="KW-0413">Isomerase</keyword>
<keyword id="KW-0464">Manganese</keyword>
<keyword id="KW-0479">Metal-binding</keyword>
<name>GPMI_EHRRG</name>
<feature type="chain" id="PRO_0000212143" description="2,3-bisphosphoglycerate-independent phosphoglycerate mutase">
    <location>
        <begin position="1"/>
        <end position="501"/>
    </location>
</feature>
<feature type="active site" description="Phosphoserine intermediate" evidence="1">
    <location>
        <position position="62"/>
    </location>
</feature>
<feature type="binding site" evidence="1">
    <location>
        <position position="12"/>
    </location>
    <ligand>
        <name>Mn(2+)</name>
        <dbReference type="ChEBI" id="CHEBI:29035"/>
        <label>2</label>
    </ligand>
</feature>
<feature type="binding site" evidence="1">
    <location>
        <position position="62"/>
    </location>
    <ligand>
        <name>Mn(2+)</name>
        <dbReference type="ChEBI" id="CHEBI:29035"/>
        <label>2</label>
    </ligand>
</feature>
<feature type="binding site" evidence="1">
    <location>
        <position position="121"/>
    </location>
    <ligand>
        <name>substrate</name>
    </ligand>
</feature>
<feature type="binding site" evidence="1">
    <location>
        <begin position="150"/>
        <end position="151"/>
    </location>
    <ligand>
        <name>substrate</name>
    </ligand>
</feature>
<feature type="binding site" evidence="1">
    <location>
        <position position="182"/>
    </location>
    <ligand>
        <name>substrate</name>
    </ligand>
</feature>
<feature type="binding site" evidence="1">
    <location>
        <position position="188"/>
    </location>
    <ligand>
        <name>substrate</name>
    </ligand>
</feature>
<feature type="binding site" evidence="1">
    <location>
        <begin position="253"/>
        <end position="256"/>
    </location>
    <ligand>
        <name>substrate</name>
    </ligand>
</feature>
<feature type="binding site" evidence="1">
    <location>
        <position position="322"/>
    </location>
    <ligand>
        <name>substrate</name>
    </ligand>
</feature>
<feature type="binding site" evidence="1">
    <location>
        <position position="389"/>
    </location>
    <ligand>
        <name>Mn(2+)</name>
        <dbReference type="ChEBI" id="CHEBI:29035"/>
        <label>1</label>
    </ligand>
</feature>
<feature type="binding site" evidence="1">
    <location>
        <position position="393"/>
    </location>
    <ligand>
        <name>Mn(2+)</name>
        <dbReference type="ChEBI" id="CHEBI:29035"/>
        <label>1</label>
    </ligand>
</feature>
<feature type="binding site" evidence="1">
    <location>
        <position position="430"/>
    </location>
    <ligand>
        <name>Mn(2+)</name>
        <dbReference type="ChEBI" id="CHEBI:29035"/>
        <label>2</label>
    </ligand>
</feature>
<feature type="binding site" evidence="1">
    <location>
        <position position="431"/>
    </location>
    <ligand>
        <name>Mn(2+)</name>
        <dbReference type="ChEBI" id="CHEBI:29035"/>
        <label>2</label>
    </ligand>
</feature>
<feature type="binding site" evidence="1">
    <location>
        <position position="449"/>
    </location>
    <ligand>
        <name>Mn(2+)</name>
        <dbReference type="ChEBI" id="CHEBI:29035"/>
        <label>1</label>
    </ligand>
</feature>
<evidence type="ECO:0000255" key="1">
    <source>
        <dbReference type="HAMAP-Rule" id="MF_01038"/>
    </source>
</evidence>
<protein>
    <recommendedName>
        <fullName evidence="1">2,3-bisphosphoglycerate-independent phosphoglycerate mutase</fullName>
        <shortName evidence="1">BPG-independent PGAM</shortName>
        <shortName evidence="1">Phosphoglyceromutase</shortName>
        <shortName evidence="1">iPGM</shortName>
        <ecNumber evidence="1">5.4.2.12</ecNumber>
    </recommendedName>
</protein>
<accession>Q5FFL8</accession>